<dbReference type="EC" id="2.3.1.180" evidence="1"/>
<dbReference type="EMBL" id="AE005673">
    <property type="protein sequence ID" value="AAK23350.1"/>
    <property type="molecule type" value="Genomic_DNA"/>
</dbReference>
<dbReference type="PIR" id="B87419">
    <property type="entry name" value="B87419"/>
</dbReference>
<dbReference type="RefSeq" id="NP_420182.1">
    <property type="nucleotide sequence ID" value="NC_002696.2"/>
</dbReference>
<dbReference type="SMR" id="Q9A8I4"/>
<dbReference type="STRING" id="190650.CC_1369"/>
<dbReference type="EnsemblBacteria" id="AAK23350">
    <property type="protein sequence ID" value="AAK23350"/>
    <property type="gene ID" value="CC_1369"/>
</dbReference>
<dbReference type="KEGG" id="ccr:CC_1369"/>
<dbReference type="PATRIC" id="fig|190650.5.peg.1399"/>
<dbReference type="eggNOG" id="COG0332">
    <property type="taxonomic scope" value="Bacteria"/>
</dbReference>
<dbReference type="HOGENOM" id="CLU_039592_3_1_5"/>
<dbReference type="BioCyc" id="CAULO:CC1369-MONOMER"/>
<dbReference type="UniPathway" id="UPA00094"/>
<dbReference type="Proteomes" id="UP000001816">
    <property type="component" value="Chromosome"/>
</dbReference>
<dbReference type="GO" id="GO:0005737">
    <property type="term" value="C:cytoplasm"/>
    <property type="evidence" value="ECO:0007669"/>
    <property type="project" value="UniProtKB-SubCell"/>
</dbReference>
<dbReference type="GO" id="GO:0004315">
    <property type="term" value="F:3-oxoacyl-[acyl-carrier-protein] synthase activity"/>
    <property type="evidence" value="ECO:0007669"/>
    <property type="project" value="InterPro"/>
</dbReference>
<dbReference type="GO" id="GO:0033818">
    <property type="term" value="F:beta-ketoacyl-acyl-carrier-protein synthase III activity"/>
    <property type="evidence" value="ECO:0007669"/>
    <property type="project" value="UniProtKB-UniRule"/>
</dbReference>
<dbReference type="GO" id="GO:0006633">
    <property type="term" value="P:fatty acid biosynthetic process"/>
    <property type="evidence" value="ECO:0007669"/>
    <property type="project" value="UniProtKB-UniRule"/>
</dbReference>
<dbReference type="CDD" id="cd00830">
    <property type="entry name" value="KAS_III"/>
    <property type="match status" value="1"/>
</dbReference>
<dbReference type="FunFam" id="3.40.47.10:FF:000004">
    <property type="entry name" value="3-oxoacyl-[acyl-carrier-protein] synthase 3"/>
    <property type="match status" value="1"/>
</dbReference>
<dbReference type="Gene3D" id="3.40.47.10">
    <property type="match status" value="1"/>
</dbReference>
<dbReference type="HAMAP" id="MF_01815">
    <property type="entry name" value="FabH"/>
    <property type="match status" value="1"/>
</dbReference>
<dbReference type="InterPro" id="IPR013747">
    <property type="entry name" value="ACP_syn_III_C"/>
</dbReference>
<dbReference type="InterPro" id="IPR013751">
    <property type="entry name" value="ACP_syn_III_N"/>
</dbReference>
<dbReference type="InterPro" id="IPR004655">
    <property type="entry name" value="FabH"/>
</dbReference>
<dbReference type="InterPro" id="IPR016039">
    <property type="entry name" value="Thiolase-like"/>
</dbReference>
<dbReference type="NCBIfam" id="TIGR00747">
    <property type="entry name" value="fabH"/>
    <property type="match status" value="1"/>
</dbReference>
<dbReference type="NCBIfam" id="NF006829">
    <property type="entry name" value="PRK09352.1"/>
    <property type="match status" value="1"/>
</dbReference>
<dbReference type="PANTHER" id="PTHR43091">
    <property type="entry name" value="3-OXOACYL-[ACYL-CARRIER-PROTEIN] SYNTHASE"/>
    <property type="match status" value="1"/>
</dbReference>
<dbReference type="PANTHER" id="PTHR43091:SF1">
    <property type="entry name" value="BETA-KETOACYL-[ACYL-CARRIER-PROTEIN] SYNTHASE III, CHLOROPLASTIC"/>
    <property type="match status" value="1"/>
</dbReference>
<dbReference type="Pfam" id="PF08545">
    <property type="entry name" value="ACP_syn_III"/>
    <property type="match status" value="1"/>
</dbReference>
<dbReference type="Pfam" id="PF08541">
    <property type="entry name" value="ACP_syn_III_C"/>
    <property type="match status" value="1"/>
</dbReference>
<dbReference type="SUPFAM" id="SSF53901">
    <property type="entry name" value="Thiolase-like"/>
    <property type="match status" value="1"/>
</dbReference>
<gene>
    <name evidence="1" type="primary">fabH</name>
    <name type="ordered locus">CC_1369</name>
</gene>
<comment type="function">
    <text evidence="1">Catalyzes the condensation reaction of fatty acid synthesis by the addition to an acyl acceptor of two carbons from malonyl-ACP. Catalyzes the first condensation reaction which initiates fatty acid synthesis and may therefore play a role in governing the total rate of fatty acid production. Possesses both acetoacetyl-ACP synthase and acetyl transacylase activities. Its substrate specificity determines the biosynthesis of branched-chain and/or straight-chain of fatty acids.</text>
</comment>
<comment type="catalytic activity">
    <reaction evidence="1">
        <text>malonyl-[ACP] + acetyl-CoA + H(+) = 3-oxobutanoyl-[ACP] + CO2 + CoA</text>
        <dbReference type="Rhea" id="RHEA:12080"/>
        <dbReference type="Rhea" id="RHEA-COMP:9623"/>
        <dbReference type="Rhea" id="RHEA-COMP:9625"/>
        <dbReference type="ChEBI" id="CHEBI:15378"/>
        <dbReference type="ChEBI" id="CHEBI:16526"/>
        <dbReference type="ChEBI" id="CHEBI:57287"/>
        <dbReference type="ChEBI" id="CHEBI:57288"/>
        <dbReference type="ChEBI" id="CHEBI:78449"/>
        <dbReference type="ChEBI" id="CHEBI:78450"/>
        <dbReference type="EC" id="2.3.1.180"/>
    </reaction>
</comment>
<comment type="pathway">
    <text evidence="1">Lipid metabolism; fatty acid biosynthesis.</text>
</comment>
<comment type="subunit">
    <text evidence="1">Homodimer.</text>
</comment>
<comment type="subcellular location">
    <subcellularLocation>
        <location evidence="1">Cytoplasm</location>
    </subcellularLocation>
</comment>
<comment type="domain">
    <text evidence="1">The last Arg residue of the ACP-binding site is essential for the weak association between ACP/AcpP and FabH.</text>
</comment>
<comment type="similarity">
    <text evidence="1">Belongs to the thiolase-like superfamily. FabH family.</text>
</comment>
<name>FABH_CAUVC</name>
<protein>
    <recommendedName>
        <fullName evidence="1">Beta-ketoacyl-[acyl-carrier-protein] synthase III</fullName>
        <shortName evidence="1">Beta-ketoacyl-ACP synthase III</shortName>
        <shortName evidence="1">KAS III</shortName>
        <ecNumber evidence="1">2.3.1.180</ecNumber>
    </recommendedName>
    <alternativeName>
        <fullName evidence="1">3-oxoacyl-[acyl-carrier-protein] synthase 3</fullName>
    </alternativeName>
    <alternativeName>
        <fullName evidence="1">3-oxoacyl-[acyl-carrier-protein] synthase III</fullName>
    </alternativeName>
</protein>
<feature type="chain" id="PRO_0000110411" description="Beta-ketoacyl-[acyl-carrier-protein] synthase III">
    <location>
        <begin position="1"/>
        <end position="322"/>
    </location>
</feature>
<feature type="region of interest" description="ACP-binding" evidence="1">
    <location>
        <begin position="250"/>
        <end position="254"/>
    </location>
</feature>
<feature type="active site" evidence="1">
    <location>
        <position position="112"/>
    </location>
</feature>
<feature type="active site" evidence="1">
    <location>
        <position position="249"/>
    </location>
</feature>
<feature type="active site" evidence="1">
    <location>
        <position position="279"/>
    </location>
</feature>
<reference key="1">
    <citation type="journal article" date="2001" name="Proc. Natl. Acad. Sci. U.S.A.">
        <title>Complete genome sequence of Caulobacter crescentus.</title>
        <authorList>
            <person name="Nierman W.C."/>
            <person name="Feldblyum T.V."/>
            <person name="Laub M.T."/>
            <person name="Paulsen I.T."/>
            <person name="Nelson K.E."/>
            <person name="Eisen J.A."/>
            <person name="Heidelberg J.F."/>
            <person name="Alley M.R.K."/>
            <person name="Ohta N."/>
            <person name="Maddock J.R."/>
            <person name="Potocka I."/>
            <person name="Nelson W.C."/>
            <person name="Newton A."/>
            <person name="Stephens C."/>
            <person name="Phadke N.D."/>
            <person name="Ely B."/>
            <person name="DeBoy R.T."/>
            <person name="Dodson R.J."/>
            <person name="Durkin A.S."/>
            <person name="Gwinn M.L."/>
            <person name="Haft D.H."/>
            <person name="Kolonay J.F."/>
            <person name="Smit J."/>
            <person name="Craven M.B."/>
            <person name="Khouri H.M."/>
            <person name="Shetty J."/>
            <person name="Berry K.J."/>
            <person name="Utterback T.R."/>
            <person name="Tran K."/>
            <person name="Wolf A.M."/>
            <person name="Vamathevan J.J."/>
            <person name="Ermolaeva M.D."/>
            <person name="White O."/>
            <person name="Salzberg S.L."/>
            <person name="Venter J.C."/>
            <person name="Shapiro L."/>
            <person name="Fraser C.M."/>
        </authorList>
    </citation>
    <scope>NUCLEOTIDE SEQUENCE [LARGE SCALE GENOMIC DNA]</scope>
    <source>
        <strain>ATCC 19089 / CIP 103742 / CB 15</strain>
    </source>
</reference>
<keyword id="KW-0012">Acyltransferase</keyword>
<keyword id="KW-0963">Cytoplasm</keyword>
<keyword id="KW-0275">Fatty acid biosynthesis</keyword>
<keyword id="KW-0276">Fatty acid metabolism</keyword>
<keyword id="KW-0444">Lipid biosynthesis</keyword>
<keyword id="KW-0443">Lipid metabolism</keyword>
<keyword id="KW-0511">Multifunctional enzyme</keyword>
<keyword id="KW-1185">Reference proteome</keyword>
<keyword id="KW-0808">Transferase</keyword>
<evidence type="ECO:0000255" key="1">
    <source>
        <dbReference type="HAMAP-Rule" id="MF_01815"/>
    </source>
</evidence>
<accession>Q9A8I4</accession>
<organism>
    <name type="scientific">Caulobacter vibrioides (strain ATCC 19089 / CIP 103742 / CB 15)</name>
    <name type="common">Caulobacter crescentus</name>
    <dbReference type="NCBI Taxonomy" id="190650"/>
    <lineage>
        <taxon>Bacteria</taxon>
        <taxon>Pseudomonadati</taxon>
        <taxon>Pseudomonadota</taxon>
        <taxon>Alphaproteobacteria</taxon>
        <taxon>Caulobacterales</taxon>
        <taxon>Caulobacteraceae</taxon>
        <taxon>Caulobacter</taxon>
    </lineage>
</organism>
<proteinExistence type="inferred from homology"/>
<sequence>MRSVVTGVGAYLPSKVVTNDDLAKFVDTSDEWIVERTGIRQRHQAADDQPVSDLAFEAAKEALAAAGKTAADVDLIIVATTTGDLTFPATATIVQRKLGAPVGVAFDVQAVCSGFVYAMSVADGFVARGHSKCALVIGAEAMTRLMDWSDRGTCVLFGDGAGAIVLEPGEGEGTTDDRGMLGFALRADGTKQDLLYVDGGPSTTGTVGKLRMLGNQVFKHAVVNISEAIHAAAGKAGVAVADVDWFIPHQANQRILQGVAHRCGIDEEKVISTVAIHANTSAASIPLAFAHGIKDGRIKKGDLLLLEAMGGGLTWGACVVRL</sequence>